<organism>
    <name type="scientific">Aspergillus fumigatus (strain ATCC MYA-4609 / CBS 101355 / FGSC A1100 / Af293)</name>
    <name type="common">Neosartorya fumigata</name>
    <dbReference type="NCBI Taxonomy" id="330879"/>
    <lineage>
        <taxon>Eukaryota</taxon>
        <taxon>Fungi</taxon>
        <taxon>Dikarya</taxon>
        <taxon>Ascomycota</taxon>
        <taxon>Pezizomycotina</taxon>
        <taxon>Eurotiomycetes</taxon>
        <taxon>Eurotiomycetidae</taxon>
        <taxon>Eurotiales</taxon>
        <taxon>Aspergillaceae</taxon>
        <taxon>Aspergillus</taxon>
        <taxon>Aspergillus subgen. Fumigati</taxon>
    </lineage>
</organism>
<evidence type="ECO:0000250" key="1">
    <source>
        <dbReference type="UniProtKB" id="B8M9J8"/>
    </source>
</evidence>
<evidence type="ECO:0000255" key="2"/>
<evidence type="ECO:0000269" key="3">
    <source>
    </source>
</evidence>
<evidence type="ECO:0000269" key="4">
    <source>
    </source>
</evidence>
<evidence type="ECO:0000269" key="5">
    <source>
    </source>
</evidence>
<evidence type="ECO:0000269" key="6">
    <source>
    </source>
</evidence>
<evidence type="ECO:0000303" key="7">
    <source>
    </source>
</evidence>
<evidence type="ECO:0000305" key="8"/>
<evidence type="ECO:0000305" key="9">
    <source>
    </source>
</evidence>
<evidence type="ECO:0000305" key="10">
    <source>
    </source>
</evidence>
<dbReference type="EC" id="1.-.-.-" evidence="5"/>
<dbReference type="EMBL" id="AAHF01000006">
    <property type="protein sequence ID" value="EAL89233.1"/>
    <property type="molecule type" value="Genomic_DNA"/>
</dbReference>
<dbReference type="RefSeq" id="XP_751271.1">
    <property type="nucleotide sequence ID" value="XM_746178.1"/>
</dbReference>
<dbReference type="SMR" id="Q4WLD1"/>
<dbReference type="STRING" id="330879.Q4WLD1"/>
<dbReference type="EnsemblFungi" id="EAL89233">
    <property type="protein sequence ID" value="EAL89233"/>
    <property type="gene ID" value="AFUA_6G13970"/>
</dbReference>
<dbReference type="GeneID" id="3508587"/>
<dbReference type="KEGG" id="afm:AFUA_6G13970"/>
<dbReference type="VEuPathDB" id="FungiDB:Afu6g13970"/>
<dbReference type="eggNOG" id="KOG2614">
    <property type="taxonomic scope" value="Eukaryota"/>
</dbReference>
<dbReference type="HOGENOM" id="CLU_009665_12_2_1"/>
<dbReference type="InParanoid" id="Q4WLD1"/>
<dbReference type="OMA" id="FRSEYNK"/>
<dbReference type="OrthoDB" id="10029326at2759"/>
<dbReference type="UniPathway" id="UPA00213"/>
<dbReference type="Proteomes" id="UP000002530">
    <property type="component" value="Chromosome 6"/>
</dbReference>
<dbReference type="GO" id="GO:0016020">
    <property type="term" value="C:membrane"/>
    <property type="evidence" value="ECO:0007669"/>
    <property type="project" value="UniProtKB-SubCell"/>
</dbReference>
<dbReference type="GO" id="GO:0071949">
    <property type="term" value="F:FAD binding"/>
    <property type="evidence" value="ECO:0007669"/>
    <property type="project" value="InterPro"/>
</dbReference>
<dbReference type="GO" id="GO:0004497">
    <property type="term" value="F:monooxygenase activity"/>
    <property type="evidence" value="ECO:0007669"/>
    <property type="project" value="UniProtKB-KW"/>
</dbReference>
<dbReference type="GO" id="GO:0044550">
    <property type="term" value="P:secondary metabolite biosynthetic process"/>
    <property type="evidence" value="ECO:0000318"/>
    <property type="project" value="GO_Central"/>
</dbReference>
<dbReference type="GO" id="GO:0016114">
    <property type="term" value="P:terpenoid biosynthetic process"/>
    <property type="evidence" value="ECO:0007669"/>
    <property type="project" value="UniProtKB-UniPathway"/>
</dbReference>
<dbReference type="Gene3D" id="3.50.50.60">
    <property type="entry name" value="FAD/NAD(P)-binding domain"/>
    <property type="match status" value="1"/>
</dbReference>
<dbReference type="InterPro" id="IPR002938">
    <property type="entry name" value="FAD-bd"/>
</dbReference>
<dbReference type="InterPro" id="IPR036188">
    <property type="entry name" value="FAD/NAD-bd_sf"/>
</dbReference>
<dbReference type="InterPro" id="IPR050562">
    <property type="entry name" value="FAD_mOase_fung"/>
</dbReference>
<dbReference type="PANTHER" id="PTHR47356:SF2">
    <property type="entry name" value="FAD-BINDING DOMAIN-CONTAINING PROTEIN-RELATED"/>
    <property type="match status" value="1"/>
</dbReference>
<dbReference type="PANTHER" id="PTHR47356">
    <property type="entry name" value="FAD-DEPENDENT MONOOXYGENASE ASQG-RELATED"/>
    <property type="match status" value="1"/>
</dbReference>
<dbReference type="Pfam" id="PF01494">
    <property type="entry name" value="FAD_binding_3"/>
    <property type="match status" value="1"/>
</dbReference>
<dbReference type="PRINTS" id="PR00420">
    <property type="entry name" value="RNGMNOXGNASE"/>
</dbReference>
<dbReference type="SUPFAM" id="SSF51905">
    <property type="entry name" value="FAD/NAD(P)-binding domain"/>
    <property type="match status" value="1"/>
</dbReference>
<proteinExistence type="evidence at protein level"/>
<accession>Q4WLD1</accession>
<reference key="1">
    <citation type="journal article" date="2005" name="Nature">
        <title>Genomic sequence of the pathogenic and allergenic filamentous fungus Aspergillus fumigatus.</title>
        <authorList>
            <person name="Nierman W.C."/>
            <person name="Pain A."/>
            <person name="Anderson M.J."/>
            <person name="Wortman J.R."/>
            <person name="Kim H.S."/>
            <person name="Arroyo J."/>
            <person name="Berriman M."/>
            <person name="Abe K."/>
            <person name="Archer D.B."/>
            <person name="Bermejo C."/>
            <person name="Bennett J.W."/>
            <person name="Bowyer P."/>
            <person name="Chen D."/>
            <person name="Collins M."/>
            <person name="Coulsen R."/>
            <person name="Davies R."/>
            <person name="Dyer P.S."/>
            <person name="Farman M.L."/>
            <person name="Fedorova N."/>
            <person name="Fedorova N.D."/>
            <person name="Feldblyum T.V."/>
            <person name="Fischer R."/>
            <person name="Fosker N."/>
            <person name="Fraser A."/>
            <person name="Garcia J.L."/>
            <person name="Garcia M.J."/>
            <person name="Goble A."/>
            <person name="Goldman G.H."/>
            <person name="Gomi K."/>
            <person name="Griffith-Jones S."/>
            <person name="Gwilliam R."/>
            <person name="Haas B.J."/>
            <person name="Haas H."/>
            <person name="Harris D.E."/>
            <person name="Horiuchi H."/>
            <person name="Huang J."/>
            <person name="Humphray S."/>
            <person name="Jimenez J."/>
            <person name="Keller N."/>
            <person name="Khouri H."/>
            <person name="Kitamoto K."/>
            <person name="Kobayashi T."/>
            <person name="Konzack S."/>
            <person name="Kulkarni R."/>
            <person name="Kumagai T."/>
            <person name="Lafton A."/>
            <person name="Latge J.-P."/>
            <person name="Li W."/>
            <person name="Lord A."/>
            <person name="Lu C."/>
            <person name="Majoros W.H."/>
            <person name="May G.S."/>
            <person name="Miller B.L."/>
            <person name="Mohamoud Y."/>
            <person name="Molina M."/>
            <person name="Monod M."/>
            <person name="Mouyna I."/>
            <person name="Mulligan S."/>
            <person name="Murphy L.D."/>
            <person name="O'Neil S."/>
            <person name="Paulsen I."/>
            <person name="Penalva M.A."/>
            <person name="Pertea M."/>
            <person name="Price C."/>
            <person name="Pritchard B.L."/>
            <person name="Quail M.A."/>
            <person name="Rabbinowitsch E."/>
            <person name="Rawlins N."/>
            <person name="Rajandream M.A."/>
            <person name="Reichard U."/>
            <person name="Renauld H."/>
            <person name="Robson G.D."/>
            <person name="Rodriguez de Cordoba S."/>
            <person name="Rodriguez-Pena J.M."/>
            <person name="Ronning C.M."/>
            <person name="Rutter S."/>
            <person name="Salzberg S.L."/>
            <person name="Sanchez M."/>
            <person name="Sanchez-Ferrero J.C."/>
            <person name="Saunders D."/>
            <person name="Seeger K."/>
            <person name="Squares R."/>
            <person name="Squares S."/>
            <person name="Takeuchi M."/>
            <person name="Tekaia F."/>
            <person name="Turner G."/>
            <person name="Vazquez de Aldana C.R."/>
            <person name="Weidman J."/>
            <person name="White O."/>
            <person name="Woodward J.R."/>
            <person name="Yu J.-H."/>
            <person name="Fraser C.M."/>
            <person name="Galagan J.E."/>
            <person name="Asai K."/>
            <person name="Machida M."/>
            <person name="Hall N."/>
            <person name="Barrell B.G."/>
            <person name="Denning D.W."/>
        </authorList>
    </citation>
    <scope>NUCLEOTIDE SEQUENCE [LARGE SCALE GENOMIC DNA]</scope>
    <source>
        <strain>ATCC MYA-4609 / CBS 101355 / FGSC A1100 / Af293</strain>
    </source>
</reference>
<reference key="2">
    <citation type="journal article" date="1995" name="Appl. Environ. Microbiol.">
        <title>Aflavinines and other antiinsectan metabolites from the ascostromata of Eupenicillium crustaceum and related species.</title>
        <authorList>
            <person name="Wang H.J."/>
            <person name="Gloer J.B."/>
            <person name="Wicklow D.T."/>
            <person name="Dowd P.F."/>
        </authorList>
    </citation>
    <scope>BIOTECHNOLOGY</scope>
</reference>
<reference key="3">
    <citation type="journal article" date="2008" name="J. Antibiot.">
        <title>Selectivity of pyripyropene derivatives in inhibition toward acyl-CoA:cholesterol acyltransferase 2 isozyme.</title>
        <authorList>
            <person name="Ohshiro T."/>
            <person name="Ohte S."/>
            <person name="Matsuda D."/>
            <person name="Ohtawa M."/>
            <person name="Nagamitsu T."/>
            <person name="Sunazuka T."/>
            <person name="Harigaya Y."/>
            <person name="Rudel L.L."/>
            <person name="Omura S."/>
            <person name="Tomoda H."/>
        </authorList>
    </citation>
    <scope>BIOTECHNOLOGY</scope>
</reference>
<reference key="4">
    <citation type="journal article" date="2009" name="Biol. Pharm. Bull.">
        <title>Pyripyropenes, fungal sesquiterpenes conjugated with alpha-pyrone and pyridine moieties, exhibits anti-angiogenic activity against human umbilical vein endothelial cells.</title>
        <authorList>
            <person name="Hayashi A."/>
            <person name="Arai M."/>
            <person name="Fujita M."/>
            <person name="Kobayashi M."/>
        </authorList>
    </citation>
    <scope>BIOTECHNOLOGY</scope>
</reference>
<reference key="5">
    <citation type="journal article" date="2010" name="Nat. Chem.">
        <title>Reconstitution of a fungal meroterpenoid biosynthesis reveals the involvement of a novel family of terpene cyclases.</title>
        <authorList>
            <person name="Itoh T."/>
            <person name="Tokunaga K."/>
            <person name="Matsuda Y."/>
            <person name="Fujii I."/>
            <person name="Abe I."/>
            <person name="Ebizuka Y."/>
            <person name="Kushiro T."/>
        </authorList>
    </citation>
    <scope>FUNCTION</scope>
    <scope>CATALYTIC ACTIVITY</scope>
</reference>
<reference key="6">
    <citation type="journal article" date="2011" name="J. Antibiot.">
        <title>Characterization of two cytochrome P450 monooxygenase genes of the pyripyropene biosynthetic gene cluster from Penicillium coprobium.</title>
        <authorList>
            <person name="Hu J."/>
            <person name="Okawa H."/>
            <person name="Yamamoto K."/>
            <person name="Oyama K."/>
            <person name="Mitomi M."/>
            <person name="Anzai H."/>
        </authorList>
    </citation>
    <scope>FUNCTION</scope>
</reference>
<reference key="7">
    <citation type="journal article" date="2014" name="Biotechnol. Biotechnol. Equip.">
        <title>Characterization of two acetyltransferase genes in the pyripyropene biosynthetic gene cluster from Penicillium coprobium.</title>
        <authorList>
            <person name="Hu J."/>
            <person name="Furutani A."/>
            <person name="Yamamoto K."/>
            <person name="Oyama K."/>
            <person name="Mitomi M."/>
            <person name="Anzai H."/>
        </authorList>
    </citation>
    <scope>FUNCTION</scope>
</reference>
<name>PYR5_ASPFU</name>
<comment type="function">
    <text evidence="5 9 10">FAD-dependent monooxygenase; part of the gene cluster that mediates the biosynthesis of pyripyropene A, a specific human acyl-coenzyme A:cholesterol acyltransferase 2 inhibitor (PubMed:20861902). The first step of the pathway is the synthesis of nicotinyl-CoA from nicotinic acid by the nicotinic acid-CoA ligase pyr1 (PubMed:20861902). Nicotinyl-CoA is then a substrate of polyketide synthase pyr2 to produce 4-hydroxy-6-(3-pyridinyl)-2H-pyran-2-one (HPPO) which is further prenylated by the polyprenyl transferase pyr6 to yield farnesyl-HPPO (PubMed:20861902). The next steps consist of an epoxidation of farnesyl-HPPO to epoxyfarnesyl-HPPO by FAD-dependent monooxygenase pyr5 and a cyclization of the terpenoid portion by the terpene cyclase pyr4 to yield deacetyl-pyripyropene E (PubMed:20861902). The 2 cytochrome P450 monooxygenases pyr3 and pyr9, and the 2 acetyltransferases pyr7 and pyr8 are involved in the conversion of deacetyl-pyripyropene E into pyripyropene A through several cycles of oxidation and acetylation steps (PubMed:20861902). Pyr7 acetylates deacetyl-pyripyropene E to pyripyropene E which is oxidized to 11-deacetyl-pyripyropene O by pyr3, which is in turn acetylated into pyripyropene O by pyr8 (PubMed:21224862, PubMed:26019565). Pyripyropene O is then oxidized to deacetyl-pyripyropene A by pyr9 (PubMed:21224862). Deacetyl-pyripyropene A is finally acetylated to pyripyropene A by pyr8 (PubMed:26019565).</text>
</comment>
<comment type="catalytic activity">
    <reaction evidence="5">
        <text>4-hydroxy-3-[(2E,6E)-farnesyl]-6-(pyridin-3-yl)-2H-pyran-2-one + NADPH + O2 + H(+) = 2-oxo-3-[(8S)-epoxy-(2E,6E)-farnesyl]-6-(pyridin-3-yl)-2H-pyran-4-olate + NADP(+) + H2O</text>
        <dbReference type="Rhea" id="RHEA:64344"/>
        <dbReference type="ChEBI" id="CHEBI:15377"/>
        <dbReference type="ChEBI" id="CHEBI:15378"/>
        <dbReference type="ChEBI" id="CHEBI:15379"/>
        <dbReference type="ChEBI" id="CHEBI:57783"/>
        <dbReference type="ChEBI" id="CHEBI:58349"/>
        <dbReference type="ChEBI" id="CHEBI:149708"/>
        <dbReference type="ChEBI" id="CHEBI:149709"/>
    </reaction>
    <physiologicalReaction direction="left-to-right" evidence="5">
        <dbReference type="Rhea" id="RHEA:64345"/>
    </physiologicalReaction>
</comment>
<comment type="cofactor">
    <cofactor evidence="8">
        <name>FAD</name>
        <dbReference type="ChEBI" id="CHEBI:57692"/>
    </cofactor>
</comment>
<comment type="pathway">
    <text evidence="5">Secondary metabolite biosynthesis; terpenoid biosynthesis.</text>
</comment>
<comment type="subcellular location">
    <subcellularLocation>
        <location evidence="2">Membrane</location>
        <topology evidence="2">Single-pass membrane protein</topology>
    </subcellularLocation>
</comment>
<comment type="biotechnology">
    <text evidence="3 4 6">Pyripyropene A and its derivatives have very unique characteristics of selectively inhibiting the acyl-coenzyme A:cholesterol acyltransferase 2 (ACAT2) isozyme (PubMed:18997389). Therefore, pyripyropenes are expected to be developed as a new type of anti-atherosclerotic agent (PubMed:18997389). Furthermore, pyripyropenes have been shown to exhibit anti-angiogenic activity against human umbilical vein endothelial cells (PubMed:19571395). Finally, pyripyropene A also exhibits insecticidal properties (PubMed:8534106).</text>
</comment>
<comment type="similarity">
    <text evidence="8">Belongs to the paxM FAD-dependent monooxygenase family.</text>
</comment>
<keyword id="KW-0274">FAD</keyword>
<keyword id="KW-0285">Flavoprotein</keyword>
<keyword id="KW-0472">Membrane</keyword>
<keyword id="KW-0503">Monooxygenase</keyword>
<keyword id="KW-0560">Oxidoreductase</keyword>
<keyword id="KW-1185">Reference proteome</keyword>
<keyword id="KW-0732">Signal</keyword>
<keyword id="KW-0812">Transmembrane</keyword>
<keyword id="KW-1133">Transmembrane helix</keyword>
<feature type="signal peptide" evidence="2">
    <location>
        <begin position="1"/>
        <end position="16"/>
    </location>
</feature>
<feature type="chain" id="PRO_5004246316" description="FAD-dependent monooxygenase pyr5">
    <location>
        <begin position="17"/>
        <end position="465"/>
    </location>
</feature>
<feature type="transmembrane region" description="Helical" evidence="2">
    <location>
        <begin position="440"/>
        <end position="456"/>
    </location>
</feature>
<feature type="active site" evidence="1">
    <location>
        <position position="210"/>
    </location>
</feature>
<feature type="binding site" evidence="1">
    <location>
        <position position="30"/>
    </location>
    <ligand>
        <name>FAD</name>
        <dbReference type="ChEBI" id="CHEBI:57692"/>
    </ligand>
</feature>
<feature type="binding site" evidence="1">
    <location>
        <position position="44"/>
    </location>
    <ligand>
        <name>FAD</name>
        <dbReference type="ChEBI" id="CHEBI:57692"/>
    </ligand>
</feature>
<feature type="binding site" evidence="1">
    <location>
        <position position="103"/>
    </location>
    <ligand>
        <name>FAD</name>
        <dbReference type="ChEBI" id="CHEBI:57692"/>
    </ligand>
</feature>
<feature type="binding site" evidence="1">
    <location>
        <position position="306"/>
    </location>
    <ligand>
        <name>FAD</name>
        <dbReference type="ChEBI" id="CHEBI:57692"/>
    </ligand>
</feature>
<feature type="binding site" evidence="1">
    <location>
        <position position="319"/>
    </location>
    <ligand>
        <name>FAD</name>
        <dbReference type="ChEBI" id="CHEBI:57692"/>
    </ligand>
</feature>
<sequence>MRVLIIGGSIAGLTLAHCLEKAKIDYVLLEKKEEIAPQEGASIGILPNGGRIMEQLGLYHQIEQLIEPLARAHVTYPDGFHFTSQYPALLQQRFGYPLAFLDRQKLLQILAAGPVQSGRVKLGHQVVNIESTPDGVTVRTSHGHVYQGDLVVGADGVHSRVRAEMWRLATASQGEIFRSEYNKLTIDYACIFGISSPVDQLEPGEQITCYNDGWSILSVIGQNGRVFWFLFIKLDKESVYDGSRKNGPRFSPADARAHCERLAHEPVWNGVKFGHVWAQCEVFQMTPLEEGLFSKWYWRNIVCIGDSMHKFAPHIGQGANCAIEDAAQLSNRLQAWLYGCGPNDPPTASDLSEILAGFVEDRLRRLGPVAVAARSAMRLHARQGVKNWILGRYLLPYAGDKPADWASQGIAGGGVTLDFVEPPERSGPGWVQFSQPRKRPTFPLTVAGLCLVAIVIRMLHSTLTV</sequence>
<gene>
    <name evidence="7" type="primary">pyr5</name>
    <name type="ORF">AFUA_6G13970</name>
</gene>
<protein>
    <recommendedName>
        <fullName evidence="7">FAD-dependent monooxygenase pyr5</fullName>
        <ecNumber evidence="5">1.-.-.-</ecNumber>
    </recommendedName>
    <alternativeName>
        <fullName evidence="7">Pyripyropene synthesis protein 5</fullName>
    </alternativeName>
</protein>